<gene>
    <name evidence="1" type="primary">thiG</name>
    <name type="ordered locus">ML0297</name>
    <name type="ORF">MLCB1450.26</name>
</gene>
<sequence>MVESKFTIGDRTFTSRLIMGTGGAANLAILEEALIASGTELTTVAIRRVDTDGGSGLLKLLSRLDIMPLPNTAGCRSAAEAVLTAQLAREALNTNWIKLEVIADERTLLPDGLELVRAAEQLVDAGFVVLPYTNDDPALAHRLEGTGCAAVMPLGSPIGTGLGINNPHNIEIIVAQARVPVVLDAGIGTTSDAALAMELGCDAVLLASAVTRAVDPPTMAAAMASAVTAGYLARRAGRIPKRFWAQASSPELMRTGEELGN</sequence>
<evidence type="ECO:0000255" key="1">
    <source>
        <dbReference type="HAMAP-Rule" id="MF_00443"/>
    </source>
</evidence>
<organism>
    <name type="scientific">Mycobacterium leprae (strain TN)</name>
    <dbReference type="NCBI Taxonomy" id="272631"/>
    <lineage>
        <taxon>Bacteria</taxon>
        <taxon>Bacillati</taxon>
        <taxon>Actinomycetota</taxon>
        <taxon>Actinomycetes</taxon>
        <taxon>Mycobacteriales</taxon>
        <taxon>Mycobacteriaceae</taxon>
        <taxon>Mycobacterium</taxon>
    </lineage>
</organism>
<accession>Q9ZBL2</accession>
<feature type="chain" id="PRO_0000162830" description="Thiazole synthase">
    <location>
        <begin position="1"/>
        <end position="261"/>
    </location>
</feature>
<feature type="active site" description="Schiff-base intermediate with DXP" evidence="1">
    <location>
        <position position="98"/>
    </location>
</feature>
<feature type="binding site" evidence="1">
    <location>
        <position position="159"/>
    </location>
    <ligand>
        <name>1-deoxy-D-xylulose 5-phosphate</name>
        <dbReference type="ChEBI" id="CHEBI:57792"/>
    </ligand>
</feature>
<feature type="binding site" evidence="1">
    <location>
        <begin position="185"/>
        <end position="186"/>
    </location>
    <ligand>
        <name>1-deoxy-D-xylulose 5-phosphate</name>
        <dbReference type="ChEBI" id="CHEBI:57792"/>
    </ligand>
</feature>
<feature type="binding site" evidence="1">
    <location>
        <begin position="207"/>
        <end position="208"/>
    </location>
    <ligand>
        <name>1-deoxy-D-xylulose 5-phosphate</name>
        <dbReference type="ChEBI" id="CHEBI:57792"/>
    </ligand>
</feature>
<comment type="function">
    <text evidence="1">Catalyzes the rearrangement of 1-deoxy-D-xylulose 5-phosphate (DXP) to produce the thiazole phosphate moiety of thiamine. Sulfur is provided by the thiocarboxylate moiety of the carrier protein ThiS. In vitro, sulfur can be provided by H(2)S.</text>
</comment>
<comment type="catalytic activity">
    <reaction evidence="1">
        <text>[ThiS sulfur-carrier protein]-C-terminal-Gly-aminoethanethioate + 2-iminoacetate + 1-deoxy-D-xylulose 5-phosphate = [ThiS sulfur-carrier protein]-C-terminal Gly-Gly + 2-[(2R,5Z)-2-carboxy-4-methylthiazol-5(2H)-ylidene]ethyl phosphate + 2 H2O + H(+)</text>
        <dbReference type="Rhea" id="RHEA:26297"/>
        <dbReference type="Rhea" id="RHEA-COMP:12909"/>
        <dbReference type="Rhea" id="RHEA-COMP:19908"/>
        <dbReference type="ChEBI" id="CHEBI:15377"/>
        <dbReference type="ChEBI" id="CHEBI:15378"/>
        <dbReference type="ChEBI" id="CHEBI:57792"/>
        <dbReference type="ChEBI" id="CHEBI:62899"/>
        <dbReference type="ChEBI" id="CHEBI:77846"/>
        <dbReference type="ChEBI" id="CHEBI:90778"/>
        <dbReference type="ChEBI" id="CHEBI:232372"/>
        <dbReference type="EC" id="2.8.1.10"/>
    </reaction>
</comment>
<comment type="pathway">
    <text evidence="1">Cofactor biosynthesis; thiamine diphosphate biosynthesis.</text>
</comment>
<comment type="subunit">
    <text evidence="1">Homotetramer. Forms heterodimers with either ThiH or ThiS.</text>
</comment>
<comment type="subcellular location">
    <subcellularLocation>
        <location evidence="1">Cytoplasm</location>
    </subcellularLocation>
</comment>
<comment type="similarity">
    <text evidence="1">Belongs to the ThiG family.</text>
</comment>
<name>THIG_MYCLE</name>
<proteinExistence type="inferred from homology"/>
<protein>
    <recommendedName>
        <fullName evidence="1">Thiazole synthase</fullName>
        <ecNumber evidence="1">2.8.1.10</ecNumber>
    </recommendedName>
</protein>
<reference key="1">
    <citation type="journal article" date="2001" name="Nature">
        <title>Massive gene decay in the leprosy bacillus.</title>
        <authorList>
            <person name="Cole S.T."/>
            <person name="Eiglmeier K."/>
            <person name="Parkhill J."/>
            <person name="James K.D."/>
            <person name="Thomson N.R."/>
            <person name="Wheeler P.R."/>
            <person name="Honore N."/>
            <person name="Garnier T."/>
            <person name="Churcher C.M."/>
            <person name="Harris D.E."/>
            <person name="Mungall K.L."/>
            <person name="Basham D."/>
            <person name="Brown D."/>
            <person name="Chillingworth T."/>
            <person name="Connor R."/>
            <person name="Davies R.M."/>
            <person name="Devlin K."/>
            <person name="Duthoy S."/>
            <person name="Feltwell T."/>
            <person name="Fraser A."/>
            <person name="Hamlin N."/>
            <person name="Holroyd S."/>
            <person name="Hornsby T."/>
            <person name="Jagels K."/>
            <person name="Lacroix C."/>
            <person name="Maclean J."/>
            <person name="Moule S."/>
            <person name="Murphy L.D."/>
            <person name="Oliver K."/>
            <person name="Quail M.A."/>
            <person name="Rajandream M.A."/>
            <person name="Rutherford K.M."/>
            <person name="Rutter S."/>
            <person name="Seeger K."/>
            <person name="Simon S."/>
            <person name="Simmonds M."/>
            <person name="Skelton J."/>
            <person name="Squares R."/>
            <person name="Squares S."/>
            <person name="Stevens K."/>
            <person name="Taylor K."/>
            <person name="Whitehead S."/>
            <person name="Woodward J.R."/>
            <person name="Barrell B.G."/>
        </authorList>
    </citation>
    <scope>NUCLEOTIDE SEQUENCE [LARGE SCALE GENOMIC DNA]</scope>
    <source>
        <strain>TN</strain>
    </source>
</reference>
<keyword id="KW-0963">Cytoplasm</keyword>
<keyword id="KW-1185">Reference proteome</keyword>
<keyword id="KW-0704">Schiff base</keyword>
<keyword id="KW-0784">Thiamine biosynthesis</keyword>
<keyword id="KW-0808">Transferase</keyword>
<dbReference type="EC" id="2.8.1.10" evidence="1"/>
<dbReference type="EMBL" id="AL035159">
    <property type="protein sequence ID" value="CAA22710.1"/>
    <property type="molecule type" value="Genomic_DNA"/>
</dbReference>
<dbReference type="EMBL" id="AL583918">
    <property type="protein sequence ID" value="CAC29805.1"/>
    <property type="molecule type" value="Genomic_DNA"/>
</dbReference>
<dbReference type="PIR" id="T44741">
    <property type="entry name" value="T44741"/>
</dbReference>
<dbReference type="RefSeq" id="NP_301333.1">
    <property type="nucleotide sequence ID" value="NC_002677.1"/>
</dbReference>
<dbReference type="RefSeq" id="WP_010907657.1">
    <property type="nucleotide sequence ID" value="NC_002677.1"/>
</dbReference>
<dbReference type="SMR" id="Q9ZBL2"/>
<dbReference type="STRING" id="272631.gene:17574116"/>
<dbReference type="KEGG" id="mle:ML0297"/>
<dbReference type="PATRIC" id="fig|272631.5.peg.464"/>
<dbReference type="Leproma" id="ML0297"/>
<dbReference type="eggNOG" id="COG2022">
    <property type="taxonomic scope" value="Bacteria"/>
</dbReference>
<dbReference type="HOGENOM" id="CLU_062233_1_0_11"/>
<dbReference type="OrthoDB" id="9805935at2"/>
<dbReference type="UniPathway" id="UPA00060"/>
<dbReference type="Proteomes" id="UP000000806">
    <property type="component" value="Chromosome"/>
</dbReference>
<dbReference type="GO" id="GO:0005737">
    <property type="term" value="C:cytoplasm"/>
    <property type="evidence" value="ECO:0007669"/>
    <property type="project" value="UniProtKB-SubCell"/>
</dbReference>
<dbReference type="GO" id="GO:1990107">
    <property type="term" value="F:thiazole synthase activity"/>
    <property type="evidence" value="ECO:0007669"/>
    <property type="project" value="UniProtKB-EC"/>
</dbReference>
<dbReference type="GO" id="GO:0009229">
    <property type="term" value="P:thiamine diphosphate biosynthetic process"/>
    <property type="evidence" value="ECO:0007669"/>
    <property type="project" value="UniProtKB-UniRule"/>
</dbReference>
<dbReference type="CDD" id="cd04728">
    <property type="entry name" value="ThiG"/>
    <property type="match status" value="1"/>
</dbReference>
<dbReference type="Gene3D" id="3.20.20.70">
    <property type="entry name" value="Aldolase class I"/>
    <property type="match status" value="1"/>
</dbReference>
<dbReference type="HAMAP" id="MF_00443">
    <property type="entry name" value="ThiG"/>
    <property type="match status" value="1"/>
</dbReference>
<dbReference type="InterPro" id="IPR013785">
    <property type="entry name" value="Aldolase_TIM"/>
</dbReference>
<dbReference type="InterPro" id="IPR033983">
    <property type="entry name" value="Thiazole_synthase_ThiG"/>
</dbReference>
<dbReference type="InterPro" id="IPR008867">
    <property type="entry name" value="ThiG"/>
</dbReference>
<dbReference type="PANTHER" id="PTHR34266">
    <property type="entry name" value="THIAZOLE SYNTHASE"/>
    <property type="match status" value="1"/>
</dbReference>
<dbReference type="PANTHER" id="PTHR34266:SF2">
    <property type="entry name" value="THIAZOLE SYNTHASE"/>
    <property type="match status" value="1"/>
</dbReference>
<dbReference type="Pfam" id="PF05690">
    <property type="entry name" value="ThiG"/>
    <property type="match status" value="1"/>
</dbReference>
<dbReference type="SUPFAM" id="SSF110399">
    <property type="entry name" value="ThiG-like"/>
    <property type="match status" value="1"/>
</dbReference>